<proteinExistence type="predicted"/>
<name>YDFF_BACSU</name>
<gene>
    <name type="primary">ydfF</name>
    <name type="ordered locus">BSU05390</name>
</gene>
<evidence type="ECO:0000255" key="1">
    <source>
        <dbReference type="PROSITE-ProRule" id="PRU00340"/>
    </source>
</evidence>
<protein>
    <recommendedName>
        <fullName>Uncharacterized HTH-type transcriptional regulator YdfF</fullName>
    </recommendedName>
</protein>
<sequence length="226" mass="25617">MNPNIAKISSLLSDPSRSSILLSLMDGRIHPAGELAYLANIKPQTASFHLNKLLEAKLISVEKHGRHRYYRLADSDAANVIEQLLHIAPKAKVKSLKESKEKKDLHFARTCYDHLAGYVGVQMAHSLVEQGMLKKVDLNFEVTSEGALFFSKLGINEEQQRNKRRAFARCCLDWSERQHHIAGALGNALLVRMLEEEWIVRMPKTRAIRITQSGKIAFEKHLNVKI</sequence>
<feature type="chain" id="PRO_0000360996" description="Uncharacterized HTH-type transcriptional regulator YdfF">
    <location>
        <begin position="1"/>
        <end position="226"/>
    </location>
</feature>
<feature type="domain" description="HTH arsR-type" evidence="1">
    <location>
        <begin position="1"/>
        <end position="92"/>
    </location>
</feature>
<feature type="DNA-binding region" description="H-T-H motif" evidence="1">
    <location>
        <begin position="32"/>
        <end position="55"/>
    </location>
</feature>
<keyword id="KW-0238">DNA-binding</keyword>
<keyword id="KW-1185">Reference proteome</keyword>
<keyword id="KW-0678">Repressor</keyword>
<keyword id="KW-0804">Transcription</keyword>
<keyword id="KW-0805">Transcription regulation</keyword>
<reference key="1">
    <citation type="submission" date="1997-03" db="EMBL/GenBank/DDBJ databases">
        <title>A 148 kbp sequence of the region between 35 and 47 degree of the Bacillus subtilis genome.</title>
        <authorList>
            <person name="Kasahara Y."/>
            <person name="Nakai S."/>
            <person name="Lee S."/>
            <person name="Sadaie Y."/>
            <person name="Ogasawara N."/>
        </authorList>
    </citation>
    <scope>NUCLEOTIDE SEQUENCE [GENOMIC DNA]</scope>
    <source>
        <strain>168</strain>
    </source>
</reference>
<reference key="2">
    <citation type="journal article" date="1997" name="Nature">
        <title>The complete genome sequence of the Gram-positive bacterium Bacillus subtilis.</title>
        <authorList>
            <person name="Kunst F."/>
            <person name="Ogasawara N."/>
            <person name="Moszer I."/>
            <person name="Albertini A.M."/>
            <person name="Alloni G."/>
            <person name="Azevedo V."/>
            <person name="Bertero M.G."/>
            <person name="Bessieres P."/>
            <person name="Bolotin A."/>
            <person name="Borchert S."/>
            <person name="Borriss R."/>
            <person name="Boursier L."/>
            <person name="Brans A."/>
            <person name="Braun M."/>
            <person name="Brignell S.C."/>
            <person name="Bron S."/>
            <person name="Brouillet S."/>
            <person name="Bruschi C.V."/>
            <person name="Caldwell B."/>
            <person name="Capuano V."/>
            <person name="Carter N.M."/>
            <person name="Choi S.-K."/>
            <person name="Codani J.-J."/>
            <person name="Connerton I.F."/>
            <person name="Cummings N.J."/>
            <person name="Daniel R.A."/>
            <person name="Denizot F."/>
            <person name="Devine K.M."/>
            <person name="Duesterhoeft A."/>
            <person name="Ehrlich S.D."/>
            <person name="Emmerson P.T."/>
            <person name="Entian K.-D."/>
            <person name="Errington J."/>
            <person name="Fabret C."/>
            <person name="Ferrari E."/>
            <person name="Foulger D."/>
            <person name="Fritz C."/>
            <person name="Fujita M."/>
            <person name="Fujita Y."/>
            <person name="Fuma S."/>
            <person name="Galizzi A."/>
            <person name="Galleron N."/>
            <person name="Ghim S.-Y."/>
            <person name="Glaser P."/>
            <person name="Goffeau A."/>
            <person name="Golightly E.J."/>
            <person name="Grandi G."/>
            <person name="Guiseppi G."/>
            <person name="Guy B.J."/>
            <person name="Haga K."/>
            <person name="Haiech J."/>
            <person name="Harwood C.R."/>
            <person name="Henaut A."/>
            <person name="Hilbert H."/>
            <person name="Holsappel S."/>
            <person name="Hosono S."/>
            <person name="Hullo M.-F."/>
            <person name="Itaya M."/>
            <person name="Jones L.-M."/>
            <person name="Joris B."/>
            <person name="Karamata D."/>
            <person name="Kasahara Y."/>
            <person name="Klaerr-Blanchard M."/>
            <person name="Klein C."/>
            <person name="Kobayashi Y."/>
            <person name="Koetter P."/>
            <person name="Koningstein G."/>
            <person name="Krogh S."/>
            <person name="Kumano M."/>
            <person name="Kurita K."/>
            <person name="Lapidus A."/>
            <person name="Lardinois S."/>
            <person name="Lauber J."/>
            <person name="Lazarevic V."/>
            <person name="Lee S.-M."/>
            <person name="Levine A."/>
            <person name="Liu H."/>
            <person name="Masuda S."/>
            <person name="Mauel C."/>
            <person name="Medigue C."/>
            <person name="Medina N."/>
            <person name="Mellado R.P."/>
            <person name="Mizuno M."/>
            <person name="Moestl D."/>
            <person name="Nakai S."/>
            <person name="Noback M."/>
            <person name="Noone D."/>
            <person name="O'Reilly M."/>
            <person name="Ogawa K."/>
            <person name="Ogiwara A."/>
            <person name="Oudega B."/>
            <person name="Park S.-H."/>
            <person name="Parro V."/>
            <person name="Pohl T.M."/>
            <person name="Portetelle D."/>
            <person name="Porwollik S."/>
            <person name="Prescott A.M."/>
            <person name="Presecan E."/>
            <person name="Pujic P."/>
            <person name="Purnelle B."/>
            <person name="Rapoport G."/>
            <person name="Rey M."/>
            <person name="Reynolds S."/>
            <person name="Rieger M."/>
            <person name="Rivolta C."/>
            <person name="Rocha E."/>
            <person name="Roche B."/>
            <person name="Rose M."/>
            <person name="Sadaie Y."/>
            <person name="Sato T."/>
            <person name="Scanlan E."/>
            <person name="Schleich S."/>
            <person name="Schroeter R."/>
            <person name="Scoffone F."/>
            <person name="Sekiguchi J."/>
            <person name="Sekowska A."/>
            <person name="Seror S.J."/>
            <person name="Serror P."/>
            <person name="Shin B.-S."/>
            <person name="Soldo B."/>
            <person name="Sorokin A."/>
            <person name="Tacconi E."/>
            <person name="Takagi T."/>
            <person name="Takahashi H."/>
            <person name="Takemaru K."/>
            <person name="Takeuchi M."/>
            <person name="Tamakoshi A."/>
            <person name="Tanaka T."/>
            <person name="Terpstra P."/>
            <person name="Tognoni A."/>
            <person name="Tosato V."/>
            <person name="Uchiyama S."/>
            <person name="Vandenbol M."/>
            <person name="Vannier F."/>
            <person name="Vassarotti A."/>
            <person name="Viari A."/>
            <person name="Wambutt R."/>
            <person name="Wedler E."/>
            <person name="Wedler H."/>
            <person name="Weitzenegger T."/>
            <person name="Winters P."/>
            <person name="Wipat A."/>
            <person name="Yamamoto H."/>
            <person name="Yamane K."/>
            <person name="Yasumoto K."/>
            <person name="Yata K."/>
            <person name="Yoshida K."/>
            <person name="Yoshikawa H.-F."/>
            <person name="Zumstein E."/>
            <person name="Yoshikawa H."/>
            <person name="Danchin A."/>
        </authorList>
    </citation>
    <scope>NUCLEOTIDE SEQUENCE [LARGE SCALE GENOMIC DNA]</scope>
    <source>
        <strain>168</strain>
    </source>
</reference>
<organism>
    <name type="scientific">Bacillus subtilis (strain 168)</name>
    <dbReference type="NCBI Taxonomy" id="224308"/>
    <lineage>
        <taxon>Bacteria</taxon>
        <taxon>Bacillati</taxon>
        <taxon>Bacillota</taxon>
        <taxon>Bacilli</taxon>
        <taxon>Bacillales</taxon>
        <taxon>Bacillaceae</taxon>
        <taxon>Bacillus</taxon>
    </lineage>
</organism>
<dbReference type="EMBL" id="AB001488">
    <property type="protein sequence ID" value="BAA19373.1"/>
    <property type="molecule type" value="Genomic_DNA"/>
</dbReference>
<dbReference type="EMBL" id="AL009126">
    <property type="protein sequence ID" value="CAB12346.1"/>
    <property type="molecule type" value="Genomic_DNA"/>
</dbReference>
<dbReference type="PIR" id="D69780">
    <property type="entry name" value="D69780"/>
</dbReference>
<dbReference type="RefSeq" id="NP_388420.1">
    <property type="nucleotide sequence ID" value="NC_000964.3"/>
</dbReference>
<dbReference type="RefSeq" id="WP_003244115.1">
    <property type="nucleotide sequence ID" value="NZ_OZ025638.1"/>
</dbReference>
<dbReference type="FunCoup" id="P96683">
    <property type="interactions" value="38"/>
</dbReference>
<dbReference type="STRING" id="224308.BSU05390"/>
<dbReference type="PaxDb" id="224308-BSU05390"/>
<dbReference type="EnsemblBacteria" id="CAB12346">
    <property type="protein sequence ID" value="CAB12346"/>
    <property type="gene ID" value="BSU_05390"/>
</dbReference>
<dbReference type="GeneID" id="938084"/>
<dbReference type="KEGG" id="bsu:BSU05390"/>
<dbReference type="PATRIC" id="fig|224308.179.peg.576"/>
<dbReference type="eggNOG" id="COG0640">
    <property type="taxonomic scope" value="Bacteria"/>
</dbReference>
<dbReference type="InParanoid" id="P96683"/>
<dbReference type="OrthoDB" id="9797716at2"/>
<dbReference type="PhylomeDB" id="P96683"/>
<dbReference type="BioCyc" id="BSUB:BSU05390-MONOMER"/>
<dbReference type="Proteomes" id="UP000001570">
    <property type="component" value="Chromosome"/>
</dbReference>
<dbReference type="GO" id="GO:0097063">
    <property type="term" value="F:cadmium ion sensor activity"/>
    <property type="evidence" value="ECO:0000318"/>
    <property type="project" value="GO_Central"/>
</dbReference>
<dbReference type="GO" id="GO:0003677">
    <property type="term" value="F:DNA binding"/>
    <property type="evidence" value="ECO:0000318"/>
    <property type="project" value="GO_Central"/>
</dbReference>
<dbReference type="GO" id="GO:0003700">
    <property type="term" value="F:DNA-binding transcription factor activity"/>
    <property type="evidence" value="ECO:0000318"/>
    <property type="project" value="GO_Central"/>
</dbReference>
<dbReference type="GO" id="GO:0032791">
    <property type="term" value="F:lead ion binding"/>
    <property type="evidence" value="ECO:0000318"/>
    <property type="project" value="GO_Central"/>
</dbReference>
<dbReference type="GO" id="GO:0010468">
    <property type="term" value="P:regulation of gene expression"/>
    <property type="evidence" value="ECO:0000318"/>
    <property type="project" value="GO_Central"/>
</dbReference>
<dbReference type="GO" id="GO:0046686">
    <property type="term" value="P:response to cadmium ion"/>
    <property type="evidence" value="ECO:0000318"/>
    <property type="project" value="GO_Central"/>
</dbReference>
<dbReference type="GO" id="GO:0010288">
    <property type="term" value="P:response to lead ion"/>
    <property type="evidence" value="ECO:0000318"/>
    <property type="project" value="GO_Central"/>
</dbReference>
<dbReference type="CDD" id="cd00090">
    <property type="entry name" value="HTH_ARSR"/>
    <property type="match status" value="1"/>
</dbReference>
<dbReference type="FunFam" id="1.10.10.10:FF:000436">
    <property type="entry name" value="ArsR family transcriptional regulator"/>
    <property type="match status" value="1"/>
</dbReference>
<dbReference type="Gene3D" id="1.10.10.10">
    <property type="entry name" value="Winged helix-like DNA-binding domain superfamily/Winged helix DNA-binding domain"/>
    <property type="match status" value="1"/>
</dbReference>
<dbReference type="InterPro" id="IPR011991">
    <property type="entry name" value="ArsR-like_HTH"/>
</dbReference>
<dbReference type="InterPro" id="IPR001845">
    <property type="entry name" value="HTH_ArsR_DNA-bd_dom"/>
</dbReference>
<dbReference type="InterPro" id="IPR052543">
    <property type="entry name" value="HTH_Metal-responsive_Reg"/>
</dbReference>
<dbReference type="InterPro" id="IPR036388">
    <property type="entry name" value="WH-like_DNA-bd_sf"/>
</dbReference>
<dbReference type="InterPro" id="IPR036390">
    <property type="entry name" value="WH_DNA-bd_sf"/>
</dbReference>
<dbReference type="NCBIfam" id="NF033788">
    <property type="entry name" value="HTH_metalloreg"/>
    <property type="match status" value="1"/>
</dbReference>
<dbReference type="PANTHER" id="PTHR39168">
    <property type="entry name" value="TRANSCRIPTIONAL REGULATOR-RELATED"/>
    <property type="match status" value="1"/>
</dbReference>
<dbReference type="PANTHER" id="PTHR39168:SF1">
    <property type="entry name" value="TRANSCRIPTIONAL REGULATORY PROTEIN"/>
    <property type="match status" value="1"/>
</dbReference>
<dbReference type="Pfam" id="PF12840">
    <property type="entry name" value="HTH_20"/>
    <property type="match status" value="1"/>
</dbReference>
<dbReference type="PRINTS" id="PR00778">
    <property type="entry name" value="HTHARSR"/>
</dbReference>
<dbReference type="SMART" id="SM00418">
    <property type="entry name" value="HTH_ARSR"/>
    <property type="match status" value="1"/>
</dbReference>
<dbReference type="SUPFAM" id="SSF46785">
    <property type="entry name" value="Winged helix' DNA-binding domain"/>
    <property type="match status" value="1"/>
</dbReference>
<dbReference type="PROSITE" id="PS50987">
    <property type="entry name" value="HTH_ARSR_2"/>
    <property type="match status" value="1"/>
</dbReference>
<accession>P96683</accession>
<accession>Q797G8</accession>